<reference key="1">
    <citation type="journal article" date="2002" name="Nucleic Acids Res.">
        <title>Genome sequence of Oceanobacillus iheyensis isolated from the Iheya Ridge and its unexpected adaptive capabilities to extreme environments.</title>
        <authorList>
            <person name="Takami H."/>
            <person name="Takaki Y."/>
            <person name="Uchiyama I."/>
        </authorList>
    </citation>
    <scope>NUCLEOTIDE SEQUENCE [LARGE SCALE GENOMIC DNA]</scope>
    <source>
        <strain>DSM 14371 / CIP 107618 / JCM 11309 / KCTC 3954 / HTE831</strain>
    </source>
</reference>
<comment type="function">
    <text evidence="1">Catalyzes the conversion of glucosamine-6-phosphate to glucosamine-1-phosphate.</text>
</comment>
<comment type="catalytic activity">
    <reaction evidence="1">
        <text>alpha-D-glucosamine 1-phosphate = D-glucosamine 6-phosphate</text>
        <dbReference type="Rhea" id="RHEA:23424"/>
        <dbReference type="ChEBI" id="CHEBI:58516"/>
        <dbReference type="ChEBI" id="CHEBI:58725"/>
        <dbReference type="EC" id="5.4.2.10"/>
    </reaction>
</comment>
<comment type="cofactor">
    <cofactor evidence="1">
        <name>Mg(2+)</name>
        <dbReference type="ChEBI" id="CHEBI:18420"/>
    </cofactor>
    <text evidence="1">Binds 1 Mg(2+) ion per subunit.</text>
</comment>
<comment type="PTM">
    <text evidence="1">Activated by phosphorylation.</text>
</comment>
<comment type="similarity">
    <text evidence="1">Belongs to the phosphohexose mutase family.</text>
</comment>
<protein>
    <recommendedName>
        <fullName evidence="1">Phosphoglucosamine mutase</fullName>
        <ecNumber evidence="1">5.4.2.10</ecNumber>
    </recommendedName>
</protein>
<gene>
    <name evidence="1" type="primary">glmM</name>
    <name type="ordered locus">OB0232</name>
</gene>
<feature type="chain" id="PRO_0000147927" description="Phosphoglucosamine mutase">
    <location>
        <begin position="1"/>
        <end position="446"/>
    </location>
</feature>
<feature type="active site" description="Phosphoserine intermediate" evidence="1">
    <location>
        <position position="100"/>
    </location>
</feature>
<feature type="binding site" description="via phosphate group" evidence="1">
    <location>
        <position position="100"/>
    </location>
    <ligand>
        <name>Mg(2+)</name>
        <dbReference type="ChEBI" id="CHEBI:18420"/>
    </ligand>
</feature>
<feature type="binding site" evidence="1">
    <location>
        <position position="239"/>
    </location>
    <ligand>
        <name>Mg(2+)</name>
        <dbReference type="ChEBI" id="CHEBI:18420"/>
    </ligand>
</feature>
<feature type="binding site" evidence="1">
    <location>
        <position position="241"/>
    </location>
    <ligand>
        <name>Mg(2+)</name>
        <dbReference type="ChEBI" id="CHEBI:18420"/>
    </ligand>
</feature>
<feature type="binding site" evidence="1">
    <location>
        <position position="243"/>
    </location>
    <ligand>
        <name>Mg(2+)</name>
        <dbReference type="ChEBI" id="CHEBI:18420"/>
    </ligand>
</feature>
<feature type="modified residue" description="Phosphoserine" evidence="1">
    <location>
        <position position="100"/>
    </location>
</feature>
<dbReference type="EC" id="5.4.2.10" evidence="1"/>
<dbReference type="EMBL" id="BA000028">
    <property type="protein sequence ID" value="BAC12188.1"/>
    <property type="molecule type" value="Genomic_DNA"/>
</dbReference>
<dbReference type="RefSeq" id="WP_011064633.1">
    <property type="nucleotide sequence ID" value="NC_004193.1"/>
</dbReference>
<dbReference type="SMR" id="Q8ETM7"/>
<dbReference type="STRING" id="221109.gene:10732435"/>
<dbReference type="KEGG" id="oih:OB0232"/>
<dbReference type="eggNOG" id="COG1109">
    <property type="taxonomic scope" value="Bacteria"/>
</dbReference>
<dbReference type="HOGENOM" id="CLU_016950_7_0_9"/>
<dbReference type="OrthoDB" id="9806956at2"/>
<dbReference type="PhylomeDB" id="Q8ETM7"/>
<dbReference type="Proteomes" id="UP000000822">
    <property type="component" value="Chromosome"/>
</dbReference>
<dbReference type="GO" id="GO:0005829">
    <property type="term" value="C:cytosol"/>
    <property type="evidence" value="ECO:0007669"/>
    <property type="project" value="TreeGrafter"/>
</dbReference>
<dbReference type="GO" id="GO:0000287">
    <property type="term" value="F:magnesium ion binding"/>
    <property type="evidence" value="ECO:0007669"/>
    <property type="project" value="UniProtKB-UniRule"/>
</dbReference>
<dbReference type="GO" id="GO:0008966">
    <property type="term" value="F:phosphoglucosamine mutase activity"/>
    <property type="evidence" value="ECO:0007669"/>
    <property type="project" value="UniProtKB-UniRule"/>
</dbReference>
<dbReference type="GO" id="GO:0004615">
    <property type="term" value="F:phosphomannomutase activity"/>
    <property type="evidence" value="ECO:0007669"/>
    <property type="project" value="TreeGrafter"/>
</dbReference>
<dbReference type="GO" id="GO:0005975">
    <property type="term" value="P:carbohydrate metabolic process"/>
    <property type="evidence" value="ECO:0007669"/>
    <property type="project" value="InterPro"/>
</dbReference>
<dbReference type="GO" id="GO:0009252">
    <property type="term" value="P:peptidoglycan biosynthetic process"/>
    <property type="evidence" value="ECO:0007669"/>
    <property type="project" value="TreeGrafter"/>
</dbReference>
<dbReference type="GO" id="GO:0006048">
    <property type="term" value="P:UDP-N-acetylglucosamine biosynthetic process"/>
    <property type="evidence" value="ECO:0007669"/>
    <property type="project" value="TreeGrafter"/>
</dbReference>
<dbReference type="CDD" id="cd05802">
    <property type="entry name" value="GlmM"/>
    <property type="match status" value="1"/>
</dbReference>
<dbReference type="FunFam" id="3.30.310.50:FF:000001">
    <property type="entry name" value="Phosphoglucosamine mutase"/>
    <property type="match status" value="1"/>
</dbReference>
<dbReference type="FunFam" id="3.40.120.10:FF:000001">
    <property type="entry name" value="Phosphoglucosamine mutase"/>
    <property type="match status" value="1"/>
</dbReference>
<dbReference type="FunFam" id="3.40.120.10:FF:000002">
    <property type="entry name" value="Phosphoglucosamine mutase"/>
    <property type="match status" value="1"/>
</dbReference>
<dbReference type="Gene3D" id="3.40.120.10">
    <property type="entry name" value="Alpha-D-Glucose-1,6-Bisphosphate, subunit A, domain 3"/>
    <property type="match status" value="3"/>
</dbReference>
<dbReference type="Gene3D" id="3.30.310.50">
    <property type="entry name" value="Alpha-D-phosphohexomutase, C-terminal domain"/>
    <property type="match status" value="1"/>
</dbReference>
<dbReference type="HAMAP" id="MF_01554_B">
    <property type="entry name" value="GlmM_B"/>
    <property type="match status" value="1"/>
</dbReference>
<dbReference type="InterPro" id="IPR005844">
    <property type="entry name" value="A-D-PHexomutase_a/b/a-I"/>
</dbReference>
<dbReference type="InterPro" id="IPR016055">
    <property type="entry name" value="A-D-PHexomutase_a/b/a-I/II/III"/>
</dbReference>
<dbReference type="InterPro" id="IPR005845">
    <property type="entry name" value="A-D-PHexomutase_a/b/a-II"/>
</dbReference>
<dbReference type="InterPro" id="IPR005846">
    <property type="entry name" value="A-D-PHexomutase_a/b/a-III"/>
</dbReference>
<dbReference type="InterPro" id="IPR005843">
    <property type="entry name" value="A-D-PHexomutase_C"/>
</dbReference>
<dbReference type="InterPro" id="IPR036900">
    <property type="entry name" value="A-D-PHexomutase_C_sf"/>
</dbReference>
<dbReference type="InterPro" id="IPR016066">
    <property type="entry name" value="A-D-PHexomutase_CS"/>
</dbReference>
<dbReference type="InterPro" id="IPR005841">
    <property type="entry name" value="Alpha-D-phosphohexomutase_SF"/>
</dbReference>
<dbReference type="InterPro" id="IPR006352">
    <property type="entry name" value="GlmM_bact"/>
</dbReference>
<dbReference type="InterPro" id="IPR050060">
    <property type="entry name" value="Phosphoglucosamine_mutase"/>
</dbReference>
<dbReference type="NCBIfam" id="TIGR01455">
    <property type="entry name" value="glmM"/>
    <property type="match status" value="1"/>
</dbReference>
<dbReference type="NCBIfam" id="NF008139">
    <property type="entry name" value="PRK10887.1"/>
    <property type="match status" value="1"/>
</dbReference>
<dbReference type="PANTHER" id="PTHR42946:SF1">
    <property type="entry name" value="PHOSPHOGLUCOMUTASE (ALPHA-D-GLUCOSE-1,6-BISPHOSPHATE-DEPENDENT)"/>
    <property type="match status" value="1"/>
</dbReference>
<dbReference type="PANTHER" id="PTHR42946">
    <property type="entry name" value="PHOSPHOHEXOSE MUTASE"/>
    <property type="match status" value="1"/>
</dbReference>
<dbReference type="Pfam" id="PF02878">
    <property type="entry name" value="PGM_PMM_I"/>
    <property type="match status" value="1"/>
</dbReference>
<dbReference type="Pfam" id="PF02879">
    <property type="entry name" value="PGM_PMM_II"/>
    <property type="match status" value="1"/>
</dbReference>
<dbReference type="Pfam" id="PF02880">
    <property type="entry name" value="PGM_PMM_III"/>
    <property type="match status" value="1"/>
</dbReference>
<dbReference type="Pfam" id="PF00408">
    <property type="entry name" value="PGM_PMM_IV"/>
    <property type="match status" value="1"/>
</dbReference>
<dbReference type="PRINTS" id="PR00509">
    <property type="entry name" value="PGMPMM"/>
</dbReference>
<dbReference type="SUPFAM" id="SSF55957">
    <property type="entry name" value="Phosphoglucomutase, C-terminal domain"/>
    <property type="match status" value="1"/>
</dbReference>
<dbReference type="SUPFAM" id="SSF53738">
    <property type="entry name" value="Phosphoglucomutase, first 3 domains"/>
    <property type="match status" value="3"/>
</dbReference>
<dbReference type="PROSITE" id="PS00710">
    <property type="entry name" value="PGM_PMM"/>
    <property type="match status" value="1"/>
</dbReference>
<organism>
    <name type="scientific">Oceanobacillus iheyensis (strain DSM 14371 / CIP 107618 / JCM 11309 / KCTC 3954 / HTE831)</name>
    <dbReference type="NCBI Taxonomy" id="221109"/>
    <lineage>
        <taxon>Bacteria</taxon>
        <taxon>Bacillati</taxon>
        <taxon>Bacillota</taxon>
        <taxon>Bacilli</taxon>
        <taxon>Bacillales</taxon>
        <taxon>Bacillaceae</taxon>
        <taxon>Oceanobacillus</taxon>
    </lineage>
</organism>
<proteinExistence type="inferred from homology"/>
<keyword id="KW-0413">Isomerase</keyword>
<keyword id="KW-0460">Magnesium</keyword>
<keyword id="KW-0479">Metal-binding</keyword>
<keyword id="KW-0597">Phosphoprotein</keyword>
<keyword id="KW-1185">Reference proteome</keyword>
<name>GLMM_OCEIH</name>
<sequence>MGKFFGTDGVRGVANEGLTPELAFKLGRFGGYVLTKDSERPRILIGRDTRVSGHMLEGALLAGLLSIGAEVMRLGVISTPGVAYLTKATSAQAGVMISASHNPVEDNGIKFFGPDGFKLTDAQENEIESLMEGEDNLPRPTGADIGVVNDYFEGGQKYLSYLKDTIDNDFEGIHIAIDCANGATSSLATHLFADLEADIYSIGSSPDGLNINDGFGSTHPEKLQEFVVEKNADIGLAFDGDGDRLIAVDEKGNLVDGDKIMFICAKYMHEIGMLRKDTVVSTVMSNLGFYKALENIGLNSNKTSVGDRYVMEEMRQNGYNLGGEQSGHIIFLDYITTGDGMLSAIQLVNVMRETGKPLSELADEMVVFPQVLKNVRVMDKNQALSSSVLLDEVDAVEKELGEDGRVLVRPSGTEPLVRVMVEAKTKEECEQYADRIVSVIEQHLGA</sequence>
<evidence type="ECO:0000255" key="1">
    <source>
        <dbReference type="HAMAP-Rule" id="MF_01554"/>
    </source>
</evidence>
<accession>Q8ETM7</accession>